<sequence length="407" mass="47364">MTPEKTKEVFQMFKGAPTRRKSENAHSHRVVLNQLQNHPPRNATQSPQRQPRTSESSMDFPRSALRRNSTDTHVFANRTHNHRDINVPACSSEEDRVSTARRNSLFVKRGSVTMEPIKKVDLEEVYTVNKQLGTGRFGFIKLAEHKQSKQRIAIKFFPRPQTKQADFVREYNYSFFLSPHQNIIDTYEGMFQSSDDTAYFFVQEFCPRASLREAVEATNQAGIGEANTKKVFAAVLSAIEFMHDENLVHRNLKAENILIFDANDYSKVKVTDFGLTRKVDTTVKYLEYVNNYHAAELCDTVVNEKLVVNKSTDIWALGIIFFYCMKGKFPWQKASIMCKPYWEWEQWLKRKNPALPKKFNPFSEKALKLFKKSLTPRFKDRWTAKDMRKCLAKEKLLKSVKVAVPYY</sequence>
<gene>
    <name type="ORF">C01C4.3</name>
</gene>
<reference key="1">
    <citation type="journal article" date="1998" name="Science">
        <title>Genome sequence of the nematode C. elegans: a platform for investigating biology.</title>
        <authorList>
            <consortium name="The C. elegans sequencing consortium"/>
        </authorList>
    </citation>
    <scope>NUCLEOTIDE SEQUENCE [LARGE SCALE GENOMIC DNA]</scope>
    <scope>ALTERNATIVE SPLICING</scope>
    <source>
        <strain>Bristol N2</strain>
    </source>
</reference>
<comment type="catalytic activity">
    <reaction>
        <text>L-seryl-[protein] + ATP = O-phospho-L-seryl-[protein] + ADP + H(+)</text>
        <dbReference type="Rhea" id="RHEA:17989"/>
        <dbReference type="Rhea" id="RHEA-COMP:9863"/>
        <dbReference type="Rhea" id="RHEA-COMP:11604"/>
        <dbReference type="ChEBI" id="CHEBI:15378"/>
        <dbReference type="ChEBI" id="CHEBI:29999"/>
        <dbReference type="ChEBI" id="CHEBI:30616"/>
        <dbReference type="ChEBI" id="CHEBI:83421"/>
        <dbReference type="ChEBI" id="CHEBI:456216"/>
        <dbReference type="EC" id="2.7.11.1"/>
    </reaction>
</comment>
<comment type="catalytic activity">
    <reaction>
        <text>L-threonyl-[protein] + ATP = O-phospho-L-threonyl-[protein] + ADP + H(+)</text>
        <dbReference type="Rhea" id="RHEA:46608"/>
        <dbReference type="Rhea" id="RHEA-COMP:11060"/>
        <dbReference type="Rhea" id="RHEA-COMP:11605"/>
        <dbReference type="ChEBI" id="CHEBI:15378"/>
        <dbReference type="ChEBI" id="CHEBI:30013"/>
        <dbReference type="ChEBI" id="CHEBI:30616"/>
        <dbReference type="ChEBI" id="CHEBI:61977"/>
        <dbReference type="ChEBI" id="CHEBI:456216"/>
        <dbReference type="EC" id="2.7.11.1"/>
    </reaction>
</comment>
<comment type="alternative products">
    <event type="alternative splicing"/>
    <isoform>
        <id>Q11090-2</id>
        <name>b</name>
        <sequence type="displayed"/>
    </isoform>
    <isoform>
        <id>Q11090-1</id>
        <name>a</name>
        <sequence type="described" ref="VSP_009624 VSP_009625"/>
    </isoform>
</comment>
<comment type="similarity">
    <text evidence="1">Belongs to the protein kinase superfamily. Ser/Thr protein kinase family.</text>
</comment>
<evidence type="ECO:0000255" key="1">
    <source>
        <dbReference type="PROSITE-ProRule" id="PRU00159"/>
    </source>
</evidence>
<evidence type="ECO:0000256" key="2">
    <source>
        <dbReference type="SAM" id="MobiDB-lite"/>
    </source>
</evidence>
<evidence type="ECO:0000305" key="3"/>
<name>YWY3_CAEEL</name>
<feature type="chain" id="PRO_0000086844" description="Putative serine/threonine-protein kinase C01C4.3">
    <location>
        <begin position="1"/>
        <end position="407"/>
    </location>
</feature>
<feature type="domain" description="Protein kinase" evidence="1">
    <location>
        <begin position="126"/>
        <end position="397"/>
    </location>
</feature>
<feature type="region of interest" description="Disordered" evidence="2">
    <location>
        <begin position="33"/>
        <end position="68"/>
    </location>
</feature>
<feature type="compositionally biased region" description="Polar residues" evidence="2">
    <location>
        <begin position="33"/>
        <end position="57"/>
    </location>
</feature>
<feature type="active site" description="Proton acceptor" evidence="1">
    <location>
        <position position="251"/>
    </location>
</feature>
<feature type="binding site" evidence="1">
    <location>
        <begin position="132"/>
        <end position="140"/>
    </location>
    <ligand>
        <name>ATP</name>
        <dbReference type="ChEBI" id="CHEBI:30616"/>
    </ligand>
</feature>
<feature type="binding site" evidence="1">
    <location>
        <position position="155"/>
    </location>
    <ligand>
        <name>ATP</name>
        <dbReference type="ChEBI" id="CHEBI:30616"/>
    </ligand>
</feature>
<feature type="splice variant" id="VSP_009624" description="In isoform a." evidence="3">
    <location>
        <begin position="1"/>
        <end position="113"/>
    </location>
</feature>
<feature type="splice variant" id="VSP_009625" description="In isoform a." evidence="3">
    <original>VAVPYY</original>
    <variation>RPEEDYYVMIDTASKSRQTATSSSGEPQDPSAPAAEQRKQKSTLQQWISTTLTAMAEISEQVVSARDD</variation>
    <location>
        <begin position="402"/>
        <end position="407"/>
    </location>
</feature>
<proteinExistence type="inferred from homology"/>
<dbReference type="EC" id="2.7.11.1"/>
<dbReference type="EMBL" id="FO080252">
    <property type="protein sequence ID" value="CCD62364.1"/>
    <property type="molecule type" value="Genomic_DNA"/>
</dbReference>
<dbReference type="EMBL" id="FO080252">
    <property type="protein sequence ID" value="CCD62365.1"/>
    <property type="molecule type" value="Genomic_DNA"/>
</dbReference>
<dbReference type="PIR" id="T34074">
    <property type="entry name" value="T34074"/>
</dbReference>
<dbReference type="RefSeq" id="NP_001367387.1">
    <molecule id="Q11090-1"/>
    <property type="nucleotide sequence ID" value="NM_001380937.1"/>
</dbReference>
<dbReference type="RefSeq" id="NP_001379594.1">
    <molecule id="Q11090-2"/>
    <property type="nucleotide sequence ID" value="NM_001392749.1"/>
</dbReference>
<dbReference type="RefSeq" id="NP_741754.2">
    <property type="nucleotide sequence ID" value="NM_171655.4"/>
</dbReference>
<dbReference type="RefSeq" id="NP_741755.1">
    <property type="nucleotide sequence ID" value="NM_171656.1"/>
</dbReference>
<dbReference type="SMR" id="Q11090"/>
<dbReference type="FunCoup" id="Q11090">
    <property type="interactions" value="43"/>
</dbReference>
<dbReference type="STRING" id="6239.C01C4.3b.1"/>
<dbReference type="iPTMnet" id="Q11090"/>
<dbReference type="PaxDb" id="6239-C01C4.3b"/>
<dbReference type="PeptideAtlas" id="Q11090"/>
<dbReference type="EnsemblMetazoa" id="C01C4.3a.1">
    <molecule id="Q11090-1"/>
    <property type="protein sequence ID" value="C01C4.3a.1"/>
    <property type="gene ID" value="WBGene00015293"/>
</dbReference>
<dbReference type="EnsemblMetazoa" id="C01C4.3a.2">
    <molecule id="Q11090-1"/>
    <property type="protein sequence ID" value="C01C4.3a.2"/>
    <property type="gene ID" value="WBGene00015293"/>
</dbReference>
<dbReference type="EnsemblMetazoa" id="C01C4.3a.3">
    <molecule id="Q11090-1"/>
    <property type="protein sequence ID" value="C01C4.3a.3"/>
    <property type="gene ID" value="WBGene00015293"/>
</dbReference>
<dbReference type="EnsemblMetazoa" id="C01C4.3a.4">
    <molecule id="Q11090-1"/>
    <property type="protein sequence ID" value="C01C4.3a.4"/>
    <property type="gene ID" value="WBGene00015293"/>
</dbReference>
<dbReference type="EnsemblMetazoa" id="C01C4.3b.1">
    <molecule id="Q11090-2"/>
    <property type="protein sequence ID" value="C01C4.3b.1"/>
    <property type="gene ID" value="WBGene00015293"/>
</dbReference>
<dbReference type="EnsemblMetazoa" id="C01C4.3b.2">
    <molecule id="Q11090-2"/>
    <property type="protein sequence ID" value="C01C4.3b.2"/>
    <property type="gene ID" value="WBGene00015293"/>
</dbReference>
<dbReference type="GeneID" id="180660"/>
<dbReference type="UCSC" id="C01C4.3b">
    <molecule id="Q11090-1"/>
    <property type="organism name" value="c. elegans"/>
</dbReference>
<dbReference type="AGR" id="WB:WBGene00015293"/>
<dbReference type="WormBase" id="C01C4.3a">
    <molecule id="Q11090-1"/>
    <property type="protein sequence ID" value="CE03889"/>
    <property type="gene ID" value="WBGene00015293"/>
</dbReference>
<dbReference type="WormBase" id="C01C4.3b">
    <molecule id="Q11090-2"/>
    <property type="protein sequence ID" value="CE30846"/>
    <property type="gene ID" value="WBGene00015293"/>
</dbReference>
<dbReference type="eggNOG" id="KOG1345">
    <property type="taxonomic scope" value="Eukaryota"/>
</dbReference>
<dbReference type="HOGENOM" id="CLU_000288_10_3_1"/>
<dbReference type="InParanoid" id="Q11090"/>
<dbReference type="OMA" id="EDYYVMI"/>
<dbReference type="PhylomeDB" id="Q11090"/>
<dbReference type="PRO" id="PR:Q11090"/>
<dbReference type="Proteomes" id="UP000001940">
    <property type="component" value="Chromosome X"/>
</dbReference>
<dbReference type="Bgee" id="WBGene00015293">
    <property type="expression patterns" value="Expressed in larva and 3 other cell types or tissues"/>
</dbReference>
<dbReference type="ExpressionAtlas" id="Q11090">
    <property type="expression patterns" value="baseline and differential"/>
</dbReference>
<dbReference type="GO" id="GO:0005737">
    <property type="term" value="C:cytoplasm"/>
    <property type="evidence" value="ECO:0000318"/>
    <property type="project" value="GO_Central"/>
</dbReference>
<dbReference type="GO" id="GO:0005524">
    <property type="term" value="F:ATP binding"/>
    <property type="evidence" value="ECO:0007669"/>
    <property type="project" value="UniProtKB-KW"/>
</dbReference>
<dbReference type="GO" id="GO:0106310">
    <property type="term" value="F:protein serine kinase activity"/>
    <property type="evidence" value="ECO:0007669"/>
    <property type="project" value="RHEA"/>
</dbReference>
<dbReference type="GO" id="GO:0004674">
    <property type="term" value="F:protein serine/threonine kinase activity"/>
    <property type="evidence" value="ECO:0000318"/>
    <property type="project" value="GO_Central"/>
</dbReference>
<dbReference type="Gene3D" id="1.10.510.10">
    <property type="entry name" value="Transferase(Phosphotransferase) domain 1"/>
    <property type="match status" value="1"/>
</dbReference>
<dbReference type="InterPro" id="IPR011009">
    <property type="entry name" value="Kinase-like_dom_sf"/>
</dbReference>
<dbReference type="InterPro" id="IPR000719">
    <property type="entry name" value="Prot_kinase_dom"/>
</dbReference>
<dbReference type="InterPro" id="IPR017441">
    <property type="entry name" value="Protein_kinase_ATP_BS"/>
</dbReference>
<dbReference type="PANTHER" id="PTHR24359:SF1">
    <property type="entry name" value="INHIBITOR OF NUCLEAR FACTOR KAPPA-B KINASE EPSILON SUBUNIT HOMOLOG 1-RELATED"/>
    <property type="match status" value="1"/>
</dbReference>
<dbReference type="PANTHER" id="PTHR24359">
    <property type="entry name" value="SERINE/THREONINE-PROTEIN KINASE SBK1"/>
    <property type="match status" value="1"/>
</dbReference>
<dbReference type="Pfam" id="PF00069">
    <property type="entry name" value="Pkinase"/>
    <property type="match status" value="1"/>
</dbReference>
<dbReference type="SUPFAM" id="SSF56112">
    <property type="entry name" value="Protein kinase-like (PK-like)"/>
    <property type="match status" value="1"/>
</dbReference>
<dbReference type="PROSITE" id="PS00107">
    <property type="entry name" value="PROTEIN_KINASE_ATP"/>
    <property type="match status" value="1"/>
</dbReference>
<dbReference type="PROSITE" id="PS50011">
    <property type="entry name" value="PROTEIN_KINASE_DOM"/>
    <property type="match status" value="1"/>
</dbReference>
<accession>Q11090</accession>
<accession>Q8MQF5</accession>
<accession>Q8MQF6</accession>
<protein>
    <recommendedName>
        <fullName>Putative serine/threonine-protein kinase C01C4.3</fullName>
        <ecNumber>2.7.11.1</ecNumber>
    </recommendedName>
</protein>
<organism>
    <name type="scientific">Caenorhabditis elegans</name>
    <dbReference type="NCBI Taxonomy" id="6239"/>
    <lineage>
        <taxon>Eukaryota</taxon>
        <taxon>Metazoa</taxon>
        <taxon>Ecdysozoa</taxon>
        <taxon>Nematoda</taxon>
        <taxon>Chromadorea</taxon>
        <taxon>Rhabditida</taxon>
        <taxon>Rhabditina</taxon>
        <taxon>Rhabditomorpha</taxon>
        <taxon>Rhabditoidea</taxon>
        <taxon>Rhabditidae</taxon>
        <taxon>Peloderinae</taxon>
        <taxon>Caenorhabditis</taxon>
    </lineage>
</organism>
<keyword id="KW-0025">Alternative splicing</keyword>
<keyword id="KW-0067">ATP-binding</keyword>
<keyword id="KW-0418">Kinase</keyword>
<keyword id="KW-0547">Nucleotide-binding</keyword>
<keyword id="KW-1185">Reference proteome</keyword>
<keyword id="KW-0723">Serine/threonine-protein kinase</keyword>
<keyword id="KW-0808">Transferase</keyword>